<gene>
    <name evidence="1" type="primary">rnhB</name>
    <name type="ordered locus">SSON_0195</name>
</gene>
<keyword id="KW-0963">Cytoplasm</keyword>
<keyword id="KW-0255">Endonuclease</keyword>
<keyword id="KW-0378">Hydrolase</keyword>
<keyword id="KW-0464">Manganese</keyword>
<keyword id="KW-0479">Metal-binding</keyword>
<keyword id="KW-0540">Nuclease</keyword>
<keyword id="KW-1185">Reference proteome</keyword>
<name>RNH2_SHISS</name>
<sequence length="198" mass="21526">MIEFVYPHTQLVAGVDEVGRGPLVGAVVTAAVILDPARPIAGLNDSKKLSEKRRLALYEEIKEKALSWSLGRAEPHEIDELNILHATMLAMQRAVAGLHIAPEYVLIDGNRCPKLPMPAMAVVKGDSRVPEISAASILAKVTRDAEMAALDIVFPQYGFAQHKGYPTAFHLEKLAEHGATEHHRRSFGPVKRALGLAS</sequence>
<comment type="function">
    <text evidence="1">Endonuclease that specifically degrades the RNA of RNA-DNA hybrids.</text>
</comment>
<comment type="catalytic activity">
    <reaction evidence="1">
        <text>Endonucleolytic cleavage to 5'-phosphomonoester.</text>
        <dbReference type="EC" id="3.1.26.4"/>
    </reaction>
</comment>
<comment type="cofactor">
    <cofactor evidence="1">
        <name>Mn(2+)</name>
        <dbReference type="ChEBI" id="CHEBI:29035"/>
    </cofactor>
    <cofactor evidence="1">
        <name>Mg(2+)</name>
        <dbReference type="ChEBI" id="CHEBI:18420"/>
    </cofactor>
    <text evidence="1">Manganese or magnesium. Binds 1 divalent metal ion per monomer in the absence of substrate. May bind a second metal ion after substrate binding.</text>
</comment>
<comment type="subcellular location">
    <subcellularLocation>
        <location evidence="1">Cytoplasm</location>
    </subcellularLocation>
</comment>
<comment type="similarity">
    <text evidence="1">Belongs to the RNase HII family.</text>
</comment>
<accession>Q3Z5H5</accession>
<feature type="chain" id="PRO_0000235765" description="Ribonuclease HII">
    <location>
        <begin position="1"/>
        <end position="198"/>
    </location>
</feature>
<feature type="domain" description="RNase H type-2" evidence="2">
    <location>
        <begin position="10"/>
        <end position="198"/>
    </location>
</feature>
<feature type="binding site" evidence="1">
    <location>
        <position position="16"/>
    </location>
    <ligand>
        <name>a divalent metal cation</name>
        <dbReference type="ChEBI" id="CHEBI:60240"/>
    </ligand>
</feature>
<feature type="binding site" evidence="1">
    <location>
        <position position="17"/>
    </location>
    <ligand>
        <name>a divalent metal cation</name>
        <dbReference type="ChEBI" id="CHEBI:60240"/>
    </ligand>
</feature>
<feature type="binding site" evidence="1">
    <location>
        <position position="108"/>
    </location>
    <ligand>
        <name>a divalent metal cation</name>
        <dbReference type="ChEBI" id="CHEBI:60240"/>
    </ligand>
</feature>
<organism>
    <name type="scientific">Shigella sonnei (strain Ss046)</name>
    <dbReference type="NCBI Taxonomy" id="300269"/>
    <lineage>
        <taxon>Bacteria</taxon>
        <taxon>Pseudomonadati</taxon>
        <taxon>Pseudomonadota</taxon>
        <taxon>Gammaproteobacteria</taxon>
        <taxon>Enterobacterales</taxon>
        <taxon>Enterobacteriaceae</taxon>
        <taxon>Shigella</taxon>
    </lineage>
</organism>
<reference key="1">
    <citation type="journal article" date="2005" name="Nucleic Acids Res.">
        <title>Genome dynamics and diversity of Shigella species, the etiologic agents of bacillary dysentery.</title>
        <authorList>
            <person name="Yang F."/>
            <person name="Yang J."/>
            <person name="Zhang X."/>
            <person name="Chen L."/>
            <person name="Jiang Y."/>
            <person name="Yan Y."/>
            <person name="Tang X."/>
            <person name="Wang J."/>
            <person name="Xiong Z."/>
            <person name="Dong J."/>
            <person name="Xue Y."/>
            <person name="Zhu Y."/>
            <person name="Xu X."/>
            <person name="Sun L."/>
            <person name="Chen S."/>
            <person name="Nie H."/>
            <person name="Peng J."/>
            <person name="Xu J."/>
            <person name="Wang Y."/>
            <person name="Yuan Z."/>
            <person name="Wen Y."/>
            <person name="Yao Z."/>
            <person name="Shen Y."/>
            <person name="Qiang B."/>
            <person name="Hou Y."/>
            <person name="Yu J."/>
            <person name="Jin Q."/>
        </authorList>
    </citation>
    <scope>NUCLEOTIDE SEQUENCE [LARGE SCALE GENOMIC DNA]</scope>
    <source>
        <strain>Ss046</strain>
    </source>
</reference>
<protein>
    <recommendedName>
        <fullName evidence="1">Ribonuclease HII</fullName>
        <shortName evidence="1">RNase HII</shortName>
        <ecNumber evidence="1">3.1.26.4</ecNumber>
    </recommendedName>
</protein>
<dbReference type="EC" id="3.1.26.4" evidence="1"/>
<dbReference type="EMBL" id="CP000038">
    <property type="protein sequence ID" value="AAZ86987.1"/>
    <property type="molecule type" value="Genomic_DNA"/>
</dbReference>
<dbReference type="RefSeq" id="WP_000569430.1">
    <property type="nucleotide sequence ID" value="NC_007384.1"/>
</dbReference>
<dbReference type="SMR" id="Q3Z5H5"/>
<dbReference type="GeneID" id="93777242"/>
<dbReference type="KEGG" id="ssn:SSON_0195"/>
<dbReference type="HOGENOM" id="CLU_036532_3_2_6"/>
<dbReference type="Proteomes" id="UP000002529">
    <property type="component" value="Chromosome"/>
</dbReference>
<dbReference type="GO" id="GO:0005737">
    <property type="term" value="C:cytoplasm"/>
    <property type="evidence" value="ECO:0007669"/>
    <property type="project" value="UniProtKB-SubCell"/>
</dbReference>
<dbReference type="GO" id="GO:0032299">
    <property type="term" value="C:ribonuclease H2 complex"/>
    <property type="evidence" value="ECO:0007669"/>
    <property type="project" value="TreeGrafter"/>
</dbReference>
<dbReference type="GO" id="GO:0030145">
    <property type="term" value="F:manganese ion binding"/>
    <property type="evidence" value="ECO:0007669"/>
    <property type="project" value="UniProtKB-UniRule"/>
</dbReference>
<dbReference type="GO" id="GO:0003723">
    <property type="term" value="F:RNA binding"/>
    <property type="evidence" value="ECO:0007669"/>
    <property type="project" value="InterPro"/>
</dbReference>
<dbReference type="GO" id="GO:0004523">
    <property type="term" value="F:RNA-DNA hybrid ribonuclease activity"/>
    <property type="evidence" value="ECO:0007669"/>
    <property type="project" value="UniProtKB-UniRule"/>
</dbReference>
<dbReference type="GO" id="GO:0043137">
    <property type="term" value="P:DNA replication, removal of RNA primer"/>
    <property type="evidence" value="ECO:0007669"/>
    <property type="project" value="TreeGrafter"/>
</dbReference>
<dbReference type="GO" id="GO:0006298">
    <property type="term" value="P:mismatch repair"/>
    <property type="evidence" value="ECO:0007669"/>
    <property type="project" value="TreeGrafter"/>
</dbReference>
<dbReference type="CDD" id="cd07182">
    <property type="entry name" value="RNase_HII_bacteria_HII_like"/>
    <property type="match status" value="1"/>
</dbReference>
<dbReference type="FunFam" id="3.30.420.10:FF:000006">
    <property type="entry name" value="Ribonuclease HII"/>
    <property type="match status" value="1"/>
</dbReference>
<dbReference type="Gene3D" id="3.30.420.10">
    <property type="entry name" value="Ribonuclease H-like superfamily/Ribonuclease H"/>
    <property type="match status" value="1"/>
</dbReference>
<dbReference type="HAMAP" id="MF_00052_B">
    <property type="entry name" value="RNase_HII_B"/>
    <property type="match status" value="1"/>
</dbReference>
<dbReference type="InterPro" id="IPR022898">
    <property type="entry name" value="RNase_HII"/>
</dbReference>
<dbReference type="InterPro" id="IPR001352">
    <property type="entry name" value="RNase_HII/HIII"/>
</dbReference>
<dbReference type="InterPro" id="IPR024567">
    <property type="entry name" value="RNase_HII/HIII_dom"/>
</dbReference>
<dbReference type="InterPro" id="IPR012337">
    <property type="entry name" value="RNaseH-like_sf"/>
</dbReference>
<dbReference type="InterPro" id="IPR036397">
    <property type="entry name" value="RNaseH_sf"/>
</dbReference>
<dbReference type="NCBIfam" id="NF000594">
    <property type="entry name" value="PRK00015.1-1"/>
    <property type="match status" value="1"/>
</dbReference>
<dbReference type="NCBIfam" id="NF000595">
    <property type="entry name" value="PRK00015.1-3"/>
    <property type="match status" value="1"/>
</dbReference>
<dbReference type="NCBIfam" id="NF000596">
    <property type="entry name" value="PRK00015.1-4"/>
    <property type="match status" value="1"/>
</dbReference>
<dbReference type="PANTHER" id="PTHR10954">
    <property type="entry name" value="RIBONUCLEASE H2 SUBUNIT A"/>
    <property type="match status" value="1"/>
</dbReference>
<dbReference type="PANTHER" id="PTHR10954:SF18">
    <property type="entry name" value="RIBONUCLEASE HII"/>
    <property type="match status" value="1"/>
</dbReference>
<dbReference type="Pfam" id="PF01351">
    <property type="entry name" value="RNase_HII"/>
    <property type="match status" value="1"/>
</dbReference>
<dbReference type="SUPFAM" id="SSF53098">
    <property type="entry name" value="Ribonuclease H-like"/>
    <property type="match status" value="1"/>
</dbReference>
<dbReference type="PROSITE" id="PS51975">
    <property type="entry name" value="RNASE_H_2"/>
    <property type="match status" value="1"/>
</dbReference>
<proteinExistence type="inferred from homology"/>
<evidence type="ECO:0000255" key="1">
    <source>
        <dbReference type="HAMAP-Rule" id="MF_00052"/>
    </source>
</evidence>
<evidence type="ECO:0000255" key="2">
    <source>
        <dbReference type="PROSITE-ProRule" id="PRU01319"/>
    </source>
</evidence>